<dbReference type="EC" id="7.1.1.1" evidence="2"/>
<dbReference type="EMBL" id="AJ235273">
    <property type="protein sequence ID" value="CAA15287.1"/>
    <property type="molecule type" value="Genomic_DNA"/>
</dbReference>
<dbReference type="EMBL" id="U02878">
    <property type="protein sequence ID" value="AAB81400.1"/>
    <property type="molecule type" value="Unassigned_DNA"/>
</dbReference>
<dbReference type="PIR" id="G71648">
    <property type="entry name" value="G71648"/>
</dbReference>
<dbReference type="RefSeq" id="NP_221211.1">
    <property type="nucleotide sequence ID" value="NC_000963.1"/>
</dbReference>
<dbReference type="RefSeq" id="WP_004596753.1">
    <property type="nucleotide sequence ID" value="NC_000963.1"/>
</dbReference>
<dbReference type="SMR" id="P41077"/>
<dbReference type="STRING" id="272947.gene:17555932"/>
<dbReference type="EnsemblBacteria" id="CAA15287">
    <property type="protein sequence ID" value="CAA15287"/>
    <property type="gene ID" value="CAA15287"/>
</dbReference>
<dbReference type="KEGG" id="rpr:RP863"/>
<dbReference type="PATRIC" id="fig|272947.5.peg.902"/>
<dbReference type="eggNOG" id="COG3288">
    <property type="taxonomic scope" value="Bacteria"/>
</dbReference>
<dbReference type="HOGENOM" id="CLU_003376_2_1_5"/>
<dbReference type="OrthoDB" id="9804592at2"/>
<dbReference type="Proteomes" id="UP000002480">
    <property type="component" value="Chromosome"/>
</dbReference>
<dbReference type="GO" id="GO:0005886">
    <property type="term" value="C:plasma membrane"/>
    <property type="evidence" value="ECO:0007669"/>
    <property type="project" value="TreeGrafter"/>
</dbReference>
<dbReference type="GO" id="GO:0070403">
    <property type="term" value="F:NAD+ binding"/>
    <property type="evidence" value="ECO:0000250"/>
    <property type="project" value="UniProtKB"/>
</dbReference>
<dbReference type="GO" id="GO:0050661">
    <property type="term" value="F:NADP binding"/>
    <property type="evidence" value="ECO:0007669"/>
    <property type="project" value="TreeGrafter"/>
</dbReference>
<dbReference type="GO" id="GO:0016491">
    <property type="term" value="F:oxidoreductase activity"/>
    <property type="evidence" value="ECO:0007669"/>
    <property type="project" value="InterPro"/>
</dbReference>
<dbReference type="GO" id="GO:0008750">
    <property type="term" value="F:proton-translocating NAD(P)+ transhydrogenase activity"/>
    <property type="evidence" value="ECO:0007669"/>
    <property type="project" value="UniProtKB-EC"/>
</dbReference>
<dbReference type="GO" id="GO:0006740">
    <property type="term" value="P:NADPH regeneration"/>
    <property type="evidence" value="ECO:0007669"/>
    <property type="project" value="TreeGrafter"/>
</dbReference>
<dbReference type="CDD" id="cd05304">
    <property type="entry name" value="Rubrum_tdh"/>
    <property type="match status" value="1"/>
</dbReference>
<dbReference type="FunFam" id="3.40.50.720:FF:000188">
    <property type="entry name" value="NAD(P) transhydrogenase alpha subunit 1"/>
    <property type="match status" value="1"/>
</dbReference>
<dbReference type="Gene3D" id="3.40.50.720">
    <property type="entry name" value="NAD(P)-binding Rossmann-like Domain"/>
    <property type="match status" value="2"/>
</dbReference>
<dbReference type="InterPro" id="IPR008142">
    <property type="entry name" value="AlaDH/PNT_CS1"/>
</dbReference>
<dbReference type="InterPro" id="IPR007886">
    <property type="entry name" value="AlaDH/PNT_N"/>
</dbReference>
<dbReference type="InterPro" id="IPR007698">
    <property type="entry name" value="AlaDH/PNT_NAD(H)-bd"/>
</dbReference>
<dbReference type="InterPro" id="IPR036291">
    <property type="entry name" value="NAD(P)-bd_dom_sf"/>
</dbReference>
<dbReference type="PANTHER" id="PTHR10160">
    <property type="entry name" value="NAD(P) TRANSHYDROGENASE"/>
    <property type="match status" value="1"/>
</dbReference>
<dbReference type="PANTHER" id="PTHR10160:SF19">
    <property type="entry name" value="PROTON-TRANSLOCATING NAD(P)(+) TRANSHYDROGENASE"/>
    <property type="match status" value="1"/>
</dbReference>
<dbReference type="Pfam" id="PF01262">
    <property type="entry name" value="AlaDh_PNT_C"/>
    <property type="match status" value="1"/>
</dbReference>
<dbReference type="Pfam" id="PF05222">
    <property type="entry name" value="AlaDh_PNT_N"/>
    <property type="match status" value="1"/>
</dbReference>
<dbReference type="SMART" id="SM01002">
    <property type="entry name" value="AlaDh_PNT_C"/>
    <property type="match status" value="1"/>
</dbReference>
<dbReference type="SMART" id="SM01003">
    <property type="entry name" value="AlaDh_PNT_N"/>
    <property type="match status" value="1"/>
</dbReference>
<dbReference type="SUPFAM" id="SSF52283">
    <property type="entry name" value="Formate/glycerate dehydrogenase catalytic domain-like"/>
    <property type="match status" value="1"/>
</dbReference>
<dbReference type="SUPFAM" id="SSF51735">
    <property type="entry name" value="NAD(P)-binding Rossmann-fold domains"/>
    <property type="match status" value="1"/>
</dbReference>
<dbReference type="PROSITE" id="PS00836">
    <property type="entry name" value="ALADH_PNT_1"/>
    <property type="match status" value="1"/>
</dbReference>
<reference key="1">
    <citation type="journal article" date="1998" name="Nature">
        <title>The genome sequence of Rickettsia prowazekii and the origin of mitochondria.</title>
        <authorList>
            <person name="Andersson S.G.E."/>
            <person name="Zomorodipour A."/>
            <person name="Andersson J.O."/>
            <person name="Sicheritz-Ponten T."/>
            <person name="Alsmark U.C.M."/>
            <person name="Podowski R.M."/>
            <person name="Naeslund A.K."/>
            <person name="Eriksson A.-S."/>
            <person name="Winkler H.H."/>
            <person name="Kurland C.G."/>
        </authorList>
    </citation>
    <scope>NUCLEOTIDE SEQUENCE [LARGE SCALE GENOMIC DNA]</scope>
    <source>
        <strain>Madrid E</strain>
    </source>
</reference>
<reference key="2">
    <citation type="journal article" date="1997" name="J. Bacteriol.">
        <title>Transcriptional characterization of the Rickettsia prowazekii major macromolecular synthesis operon.</title>
        <authorList>
            <person name="Shaw E.I."/>
            <person name="Marks G.L."/>
            <person name="Winkler H.H."/>
            <person name="Wood D.O."/>
        </authorList>
    </citation>
    <scope>NUCLEOTIDE SEQUENCE [GENOMIC DNA] OF 215-383</scope>
    <source>
        <strain>Madrid E</strain>
    </source>
</reference>
<reference key="3">
    <citation type="journal article" date="1996" name="J. Mol. Evol.">
        <title>Codon usage and base composition in Rickettsia prowazekii.</title>
        <authorList>
            <person name="Andersson S.G.E."/>
            <person name="Sharp P.M."/>
        </authorList>
    </citation>
    <scope>GENE NAME</scope>
</reference>
<keyword id="KW-0520">NAD</keyword>
<keyword id="KW-0521">NADP</keyword>
<keyword id="KW-0547">Nucleotide-binding</keyword>
<keyword id="KW-1185">Reference proteome</keyword>
<keyword id="KW-1278">Translocase</keyword>
<comment type="function">
    <text evidence="1">The transhydrogenation between NADH and NADP is coupled to respiration and ATP hydrolysis and functions as a proton pump across the membrane.</text>
</comment>
<comment type="catalytic activity">
    <reaction evidence="2">
        <text>NAD(+) + NADPH + H(+)(in) = NADH + NADP(+) + H(+)(out)</text>
        <dbReference type="Rhea" id="RHEA:47992"/>
        <dbReference type="ChEBI" id="CHEBI:15378"/>
        <dbReference type="ChEBI" id="CHEBI:57540"/>
        <dbReference type="ChEBI" id="CHEBI:57783"/>
        <dbReference type="ChEBI" id="CHEBI:57945"/>
        <dbReference type="ChEBI" id="CHEBI:58349"/>
        <dbReference type="EC" id="7.1.1.1"/>
    </reaction>
</comment>
<comment type="subunit">
    <text evidence="1">Heterotrimer of two alpha chains and a beta (PntB) chain; in Rickettsia, the alpha chain is made of two subunits (PntAA and PntAB) and forms a dimer.</text>
</comment>
<comment type="similarity">
    <text evidence="3">Belongs to the AlaDH/PNT family.</text>
</comment>
<evidence type="ECO:0000250" key="1"/>
<evidence type="ECO:0000250" key="2">
    <source>
        <dbReference type="UniProtKB" id="Q2RSB2"/>
    </source>
</evidence>
<evidence type="ECO:0000305" key="3"/>
<feature type="chain" id="PRO_0000199020" description="NAD(P) transhydrogenase subunit alpha part 1">
    <location>
        <begin position="1"/>
        <end position="383"/>
    </location>
</feature>
<feature type="binding site" evidence="1">
    <location>
        <begin position="131"/>
        <end position="134"/>
    </location>
    <ligand>
        <name>NAD(+)</name>
        <dbReference type="ChEBI" id="CHEBI:57540"/>
    </ligand>
</feature>
<feature type="binding site" evidence="1">
    <location>
        <position position="181"/>
    </location>
    <ligand>
        <name>NAD(+)</name>
        <dbReference type="ChEBI" id="CHEBI:57540"/>
    </ligand>
</feature>
<feature type="binding site" evidence="1">
    <location>
        <begin position="201"/>
        <end position="203"/>
    </location>
    <ligand>
        <name>NAD(+)</name>
        <dbReference type="ChEBI" id="CHEBI:57540"/>
    </ligand>
</feature>
<feature type="binding site" evidence="1">
    <location>
        <position position="231"/>
    </location>
    <ligand>
        <name>NAD(+)</name>
        <dbReference type="ChEBI" id="CHEBI:57540"/>
    </ligand>
</feature>
<protein>
    <recommendedName>
        <fullName>NAD(P) transhydrogenase subunit alpha part 1</fullName>
        <ecNumber evidence="2">7.1.1.1</ecNumber>
    </recommendedName>
    <alternativeName>
        <fullName>Nicotinamide nucleotide transhydrogenase subunit alpha 1</fullName>
    </alternativeName>
    <alternativeName>
        <fullName>Pyridine nucleotide transhydrogenase subunit alpha 1</fullName>
    </alternativeName>
</protein>
<organism>
    <name type="scientific">Rickettsia prowazekii (strain Madrid E)</name>
    <dbReference type="NCBI Taxonomy" id="272947"/>
    <lineage>
        <taxon>Bacteria</taxon>
        <taxon>Pseudomonadati</taxon>
        <taxon>Pseudomonadota</taxon>
        <taxon>Alphaproteobacteria</taxon>
        <taxon>Rickettsiales</taxon>
        <taxon>Rickettsiaceae</taxon>
        <taxon>Rickettsieae</taxon>
        <taxon>Rickettsia</taxon>
        <taxon>typhus group</taxon>
    </lineage>
</organism>
<name>PNTAA_RICPR</name>
<gene>
    <name type="primary">pntAA</name>
    <name type="ordered locus">RP863</name>
</gene>
<sequence length="383" mass="41638">MKIVALKEKVKNETRTAITPEVAGLLIKKGYAVTVEKDIGLYAGFLDEEYVAVGTKISSVPLEIISDADIILKVQPSSVTDKYSELEFAKQGAIVVGLLSPYLNHEYIKAAAKKNLTTFAMEFVPRITKAQNMDALSSQSNLVGYRAVIEASYHYTKAFPMMITAAGTISACKTLVLGVGVAGLQAIATAKRLGSIVAGYDVRIATKEQVESLGAKFVSPELQEDLEEESGYASESSADYKAKQEKFLAKIIKGYNIVITTAQIPGKKAPMLVTDKMIESMMYGSVIVDISTSTGGNVEGSEPDKIVTRHGVTIIGLLNLASKIASDSSKLYSKNLYNFLTYALQDGQFNMDDELVRDMLITKDGKIVNYIIREKYESITDNG</sequence>
<proteinExistence type="inferred from homology"/>
<accession>P41077</accession>